<comment type="function">
    <text evidence="1">May act as a negative regulator of ASF1 in chromatin assembly.</text>
</comment>
<comment type="subunit">
    <text evidence="1">Interacts with ASF1A and ASF1B. Found in a cytosolic complex with ASF1A, ASF1B, IPO4 and histones H3.1 and H4.</text>
</comment>
<comment type="subcellular location">
    <subcellularLocation>
        <location evidence="1">Cytoplasm</location>
    </subcellularLocation>
    <subcellularLocation>
        <location evidence="1">Nucleus</location>
    </subcellularLocation>
    <subcellularLocation>
        <location evidence="8">Membrane</location>
        <topology evidence="8">Multi-pass membrane protein</topology>
    </subcellularLocation>
    <text>Mainly detected as a cytoplasmic protein.</text>
</comment>
<comment type="alternative products">
    <event type="alternative splicing"/>
    <isoform>
        <id>Q8CC12-1</id>
        <name>1</name>
        <sequence type="displayed"/>
    </isoform>
    <isoform>
        <id>Q8CC12-2</id>
        <name>2</name>
        <sequence type="described" ref="VSP_027100"/>
    </isoform>
    <isoform>
        <id>Q8CC12-3</id>
        <name>3</name>
        <sequence type="described" ref="VSP_027099"/>
    </isoform>
</comment>
<comment type="tissue specificity">
    <text evidence="5">Widely expressed in adult mice, the highest levels can be measured in erythropoietic cells.</text>
</comment>
<comment type="developmental stage">
    <text evidence="5">Expressed ubiquitously during early embryogenesis.</text>
</comment>
<comment type="disruption phenotype">
    <text evidence="5">Embryonic lethal; embryos die before 7.5 days of gestation.</text>
</comment>
<comment type="sequence caution" evidence="8">
    <conflict type="frameshift">
        <sequence resource="EMBL-CDS" id="BAE34023"/>
    </conflict>
</comment>
<comment type="sequence caution" evidence="8">
    <conflict type="erroneous gene model prediction">
        <sequence resource="EMBL-CDS" id="CAM21399"/>
    </conflict>
</comment>
<dbReference type="EMBL" id="AK034144">
    <property type="protein sequence ID" value="BAC28605.1"/>
    <property type="molecule type" value="mRNA"/>
</dbReference>
<dbReference type="EMBL" id="AK157271">
    <property type="protein sequence ID" value="BAE34023.1"/>
    <property type="status" value="ALT_FRAME"/>
    <property type="molecule type" value="mRNA"/>
</dbReference>
<dbReference type="EMBL" id="AL935168">
    <property type="protein sequence ID" value="CAM21399.1"/>
    <property type="status" value="ALT_SEQ"/>
    <property type="molecule type" value="Genomic_DNA"/>
</dbReference>
<dbReference type="EMBL" id="BC117555">
    <property type="protein sequence ID" value="AAI17556.1"/>
    <property type="molecule type" value="mRNA"/>
</dbReference>
<dbReference type="CCDS" id="CCDS38212.1">
    <molecule id="Q8CC12-1"/>
</dbReference>
<dbReference type="RefSeq" id="NP_081167.2">
    <molecule id="Q8CC12-1"/>
    <property type="nucleotide sequence ID" value="NM_026891.2"/>
</dbReference>
<dbReference type="SMR" id="Q8CC12"/>
<dbReference type="BioGRID" id="213146">
    <property type="interactions" value="1"/>
</dbReference>
<dbReference type="FunCoup" id="Q8CC12">
    <property type="interactions" value="4280"/>
</dbReference>
<dbReference type="IntAct" id="Q8CC12">
    <property type="interactions" value="2"/>
</dbReference>
<dbReference type="MINT" id="Q8CC12"/>
<dbReference type="STRING" id="10090.ENSMUSP00000106329"/>
<dbReference type="GlyGen" id="Q8CC12">
    <property type="glycosylation" value="3 sites, 1 O-linked glycan (2 sites)"/>
</dbReference>
<dbReference type="iPTMnet" id="Q8CC12"/>
<dbReference type="PhosphoSitePlus" id="Q8CC12"/>
<dbReference type="jPOST" id="Q8CC12"/>
<dbReference type="PaxDb" id="10090-ENSMUSP00000106329"/>
<dbReference type="PeptideAtlas" id="Q8CC12"/>
<dbReference type="ProteomicsDB" id="283760">
    <molecule id="Q8CC12-1"/>
</dbReference>
<dbReference type="ProteomicsDB" id="283761">
    <molecule id="Q8CC12-2"/>
</dbReference>
<dbReference type="ProteomicsDB" id="283762">
    <molecule id="Q8CC12-3"/>
</dbReference>
<dbReference type="Pumba" id="Q8CC12"/>
<dbReference type="Antibodypedia" id="42152">
    <property type="antibodies" value="131 antibodies from 19 providers"/>
</dbReference>
<dbReference type="Ensembl" id="ENSMUST00000110701.8">
    <molecule id="Q8CC12-1"/>
    <property type="protein sequence ID" value="ENSMUSP00000106329.2"/>
    <property type="gene ID" value="ENSMUSG00000027284.17"/>
</dbReference>
<dbReference type="GeneID" id="68968"/>
<dbReference type="KEGG" id="mmu:68968"/>
<dbReference type="UCSC" id="uc008lwu.1">
    <molecule id="Q8CC12-1"/>
    <property type="organism name" value="mouse"/>
</dbReference>
<dbReference type="UCSC" id="uc008lwv.1">
    <molecule id="Q8CC12-2"/>
    <property type="organism name" value="mouse"/>
</dbReference>
<dbReference type="AGR" id="MGI:1916218"/>
<dbReference type="CTD" id="146059"/>
<dbReference type="MGI" id="MGI:1916218">
    <property type="gene designation" value="Cdan1"/>
</dbReference>
<dbReference type="VEuPathDB" id="HostDB:ENSMUSG00000027284"/>
<dbReference type="eggNOG" id="ENOG502QPWR">
    <property type="taxonomic scope" value="Eukaryota"/>
</dbReference>
<dbReference type="GeneTree" id="ENSGT00390000000491"/>
<dbReference type="HOGENOM" id="CLU_007378_0_0_1"/>
<dbReference type="InParanoid" id="Q8CC12"/>
<dbReference type="OMA" id="CVVKDAQ"/>
<dbReference type="OrthoDB" id="20982at2759"/>
<dbReference type="PhylomeDB" id="Q8CC12"/>
<dbReference type="TreeFam" id="TF328405"/>
<dbReference type="BioGRID-ORCS" id="68968">
    <property type="hits" value="16 hits in 75 CRISPR screens"/>
</dbReference>
<dbReference type="ChiTaRS" id="Cdan1">
    <property type="organism name" value="mouse"/>
</dbReference>
<dbReference type="PRO" id="PR:Q8CC12"/>
<dbReference type="Proteomes" id="UP000000589">
    <property type="component" value="Chromosome 2"/>
</dbReference>
<dbReference type="RNAct" id="Q8CC12">
    <property type="molecule type" value="protein"/>
</dbReference>
<dbReference type="Bgee" id="ENSMUSG00000027284">
    <property type="expression patterns" value="Expressed in spermatocyte and 228 other cell types or tissues"/>
</dbReference>
<dbReference type="ExpressionAtlas" id="Q8CC12">
    <property type="expression patterns" value="baseline and differential"/>
</dbReference>
<dbReference type="GO" id="GO:0005737">
    <property type="term" value="C:cytoplasm"/>
    <property type="evidence" value="ECO:0000250"/>
    <property type="project" value="UniProtKB"/>
</dbReference>
<dbReference type="GO" id="GO:0012505">
    <property type="term" value="C:endomembrane system"/>
    <property type="evidence" value="ECO:0000314"/>
    <property type="project" value="MGI"/>
</dbReference>
<dbReference type="GO" id="GO:0016020">
    <property type="term" value="C:membrane"/>
    <property type="evidence" value="ECO:0007669"/>
    <property type="project" value="UniProtKB-SubCell"/>
</dbReference>
<dbReference type="GO" id="GO:0005634">
    <property type="term" value="C:nucleus"/>
    <property type="evidence" value="ECO:0000314"/>
    <property type="project" value="MGI"/>
</dbReference>
<dbReference type="GO" id="GO:0006325">
    <property type="term" value="P:chromatin organization"/>
    <property type="evidence" value="ECO:0000250"/>
    <property type="project" value="UniProtKB"/>
</dbReference>
<dbReference type="GO" id="GO:0051170">
    <property type="term" value="P:import into nucleus"/>
    <property type="evidence" value="ECO:0000250"/>
    <property type="project" value="UniProtKB"/>
</dbReference>
<dbReference type="GO" id="GO:0006998">
    <property type="term" value="P:nuclear envelope organization"/>
    <property type="evidence" value="ECO:0000304"/>
    <property type="project" value="MGI"/>
</dbReference>
<dbReference type="GO" id="GO:0008104">
    <property type="term" value="P:protein localization"/>
    <property type="evidence" value="ECO:0000266"/>
    <property type="project" value="MGI"/>
</dbReference>
<dbReference type="InterPro" id="IPR040031">
    <property type="entry name" value="Codanin-1"/>
</dbReference>
<dbReference type="InterPro" id="IPR028171">
    <property type="entry name" value="Codanin-1_C"/>
</dbReference>
<dbReference type="PANTHER" id="PTHR28678">
    <property type="entry name" value="CODANIN-1"/>
    <property type="match status" value="1"/>
</dbReference>
<dbReference type="PANTHER" id="PTHR28678:SF1">
    <property type="entry name" value="CODANIN-1"/>
    <property type="match status" value="1"/>
</dbReference>
<dbReference type="Pfam" id="PF15296">
    <property type="entry name" value="Codanin-1_C"/>
    <property type="match status" value="1"/>
</dbReference>
<gene>
    <name type="primary">Cdan1</name>
</gene>
<accession>Q8CC12</accession>
<accession>A2AW10</accession>
<accession>Q149P8</accession>
<accession>Q3U032</accession>
<evidence type="ECO:0000250" key="1"/>
<evidence type="ECO:0000250" key="2">
    <source>
        <dbReference type="UniProtKB" id="Q8IWY9"/>
    </source>
</evidence>
<evidence type="ECO:0000255" key="3"/>
<evidence type="ECO:0000256" key="4">
    <source>
        <dbReference type="SAM" id="MobiDB-lite"/>
    </source>
</evidence>
<evidence type="ECO:0000269" key="5">
    <source>
    </source>
</evidence>
<evidence type="ECO:0000303" key="6">
    <source>
    </source>
</evidence>
<evidence type="ECO:0000303" key="7">
    <source>
    </source>
</evidence>
<evidence type="ECO:0000305" key="8"/>
<sequence>MAAVLESLLREEVPVAAAVRWIARSTPSSEDSSEVAALSALRPLRKEFVPFLLNFLREQSSRVLPQGPSTPAKTPVASAALPARQGAPARGGRGARSQLFPAAEPLSAAAEAPLARRAGRRRGPGPGPSRERGGRGSGAAEEGASGESPPWAGGRKPKGSGSPGSPRLSLSDPPNLSNLEEFPPVGTVPPGSAGRTKPSRRINPTPVSEERSLSKPKTCFTSPPISCVPSSQPSTLDTSPWGLGLPPGCRSLQEEREMLRKARTKQLQQSPTPASPIPESGSPVPSRTGNLTAEPADPARVSSRQRLELVALIYSSCIAENLVPNLFLELFFVLQLLTARRMVATKDSDLESSQGALDSLDTPLFRSIHDCVFFAVQVLEHQFQVLSYLDKGTLKLLAENERLLCFSPALQGRLRAAYEGSVAKVSLVIPPSAQAVSFQPETDNRANFSSDRAFHTFKKQRDVFYEVLREWEDHHEEPSWDFEKGLGSRIRAMMGQLSAACSHSHFVRLFQKQLLQMCQSPGGAGGSVLGEAPDVLNMLGADKLGRLRQLQERLIAPQSSGGPCPPPTFPGCQGFFRDFIMSASSFHFNQHLMDSLSLKIRELNGLRLPQHEPGDEDGESDMDWQGERRQFAVVLLSLRLLAKFLGFVAFLPYRGHEPPPTRELQDSILALRSQVPPVLDIRALLQQGLWARRAVLTVPWLVEFLSFADHIVPLLDYYRSVFTLLLRLHRSLVLSKENEGEMCFLNKLLLLAVLGWLFQIPTVPEDLFFLEDGQVDAFEVTTTASEHGLDSVPVVDQQLLYTCCPYIGELRKLLASWVSGSSGRSGGFVRKITPTTTSSLGALPLQTSQGLQAQLAEAFFHNQPPSLRRTVEFVAERIGSNCVKHIKATLVADLVHQAESLLQEQLVARGQEGGDPAQLLESLCSQLCPHGAQALTQGREFCQRKSPTAVRALLPEETPAAVLSSAENIAVGLATEKACSWLSANITALIRREVKAAVSRMLRAQGPEPTARVERRGCSRACEHHAPLPSHLISEIKFHHCSLQDVLSLAAGPRDPEEGVSPEHLEQLLNQMGQSLRCRQFLCPTAEQHLAKCSVELASLLVADQIPILGPPTQHRLERGHARRLLHMLLSLWKDDFQGPVPLQLLLSPRNVGLLADTRPREWDLLLFLLRELVEKDLMGHLEIEACLGRLNEAQWPGDFSEELSTLFRLFLAEPHLLEPQLRACELMQPNRGTVLAQS</sequence>
<feature type="initiator methionine" description="Removed" evidence="2">
    <location>
        <position position="1"/>
    </location>
</feature>
<feature type="chain" id="PRO_0000089440" description="Codanin-1">
    <location>
        <begin position="2"/>
        <end position="1239"/>
    </location>
</feature>
<feature type="transmembrane region" description="Helical" evidence="3">
    <location>
        <begin position="317"/>
        <end position="337"/>
    </location>
</feature>
<feature type="transmembrane region" description="Helical" evidence="3">
    <location>
        <begin position="631"/>
        <end position="651"/>
    </location>
</feature>
<feature type="region of interest" description="Disordered" evidence="4">
    <location>
        <begin position="61"/>
        <end position="249"/>
    </location>
</feature>
<feature type="region of interest" description="Interaction with ASF1A/B" evidence="1">
    <location>
        <begin position="193"/>
        <end position="213"/>
    </location>
</feature>
<feature type="region of interest" description="Disordered" evidence="4">
    <location>
        <begin position="261"/>
        <end position="299"/>
    </location>
</feature>
<feature type="compositionally biased region" description="Polar residues" evidence="4">
    <location>
        <begin position="61"/>
        <end position="72"/>
    </location>
</feature>
<feature type="compositionally biased region" description="Low complexity" evidence="4">
    <location>
        <begin position="77"/>
        <end position="88"/>
    </location>
</feature>
<feature type="compositionally biased region" description="Low complexity" evidence="4">
    <location>
        <begin position="95"/>
        <end position="116"/>
    </location>
</feature>
<feature type="compositionally biased region" description="Low complexity" evidence="4">
    <location>
        <begin position="138"/>
        <end position="179"/>
    </location>
</feature>
<feature type="compositionally biased region" description="Polar residues" evidence="4">
    <location>
        <begin position="219"/>
        <end position="238"/>
    </location>
</feature>
<feature type="modified residue" description="N-acetylalanine" evidence="2">
    <location>
        <position position="2"/>
    </location>
</feature>
<feature type="modified residue" description="Phosphothreonine" evidence="2">
    <location>
        <position position="70"/>
    </location>
</feature>
<feature type="modified residue" description="Phosphoserine" evidence="2">
    <location>
        <position position="270"/>
    </location>
</feature>
<feature type="splice variant" id="VSP_027099" description="In isoform 3." evidence="6">
    <location>
        <begin position="1"/>
        <end position="341"/>
    </location>
</feature>
<feature type="splice variant" id="VSP_027100" description="In isoform 2." evidence="7">
    <location>
        <begin position="1038"/>
        <end position="1044"/>
    </location>
</feature>
<feature type="sequence conflict" description="In Ref. 2; BAE34023." evidence="8" ref="2">
    <original>A</original>
    <variation>P</variation>
    <location>
        <position position="140"/>
    </location>
</feature>
<feature type="sequence conflict" description="In Ref. 2; BAE34023." evidence="8" ref="2">
    <original>P</original>
    <variation>L</variation>
    <location>
        <position position="1220"/>
    </location>
</feature>
<reference key="1">
    <citation type="journal article" date="2005" name="Science">
        <title>The transcriptional landscape of the mammalian genome.</title>
        <authorList>
            <person name="Carninci P."/>
            <person name="Kasukawa T."/>
            <person name="Katayama S."/>
            <person name="Gough J."/>
            <person name="Frith M.C."/>
            <person name="Maeda N."/>
            <person name="Oyama R."/>
            <person name="Ravasi T."/>
            <person name="Lenhard B."/>
            <person name="Wells C."/>
            <person name="Kodzius R."/>
            <person name="Shimokawa K."/>
            <person name="Bajic V.B."/>
            <person name="Brenner S.E."/>
            <person name="Batalov S."/>
            <person name="Forrest A.R."/>
            <person name="Zavolan M."/>
            <person name="Davis M.J."/>
            <person name="Wilming L.G."/>
            <person name="Aidinis V."/>
            <person name="Allen J.E."/>
            <person name="Ambesi-Impiombato A."/>
            <person name="Apweiler R."/>
            <person name="Aturaliya R.N."/>
            <person name="Bailey T.L."/>
            <person name="Bansal M."/>
            <person name="Baxter L."/>
            <person name="Beisel K.W."/>
            <person name="Bersano T."/>
            <person name="Bono H."/>
            <person name="Chalk A.M."/>
            <person name="Chiu K.P."/>
            <person name="Choudhary V."/>
            <person name="Christoffels A."/>
            <person name="Clutterbuck D.R."/>
            <person name="Crowe M.L."/>
            <person name="Dalla E."/>
            <person name="Dalrymple B.P."/>
            <person name="de Bono B."/>
            <person name="Della Gatta G."/>
            <person name="di Bernardo D."/>
            <person name="Down T."/>
            <person name="Engstrom P."/>
            <person name="Fagiolini M."/>
            <person name="Faulkner G."/>
            <person name="Fletcher C.F."/>
            <person name="Fukushima T."/>
            <person name="Furuno M."/>
            <person name="Futaki S."/>
            <person name="Gariboldi M."/>
            <person name="Georgii-Hemming P."/>
            <person name="Gingeras T.R."/>
            <person name="Gojobori T."/>
            <person name="Green R.E."/>
            <person name="Gustincich S."/>
            <person name="Harbers M."/>
            <person name="Hayashi Y."/>
            <person name="Hensch T.K."/>
            <person name="Hirokawa N."/>
            <person name="Hill D."/>
            <person name="Huminiecki L."/>
            <person name="Iacono M."/>
            <person name="Ikeo K."/>
            <person name="Iwama A."/>
            <person name="Ishikawa T."/>
            <person name="Jakt M."/>
            <person name="Kanapin A."/>
            <person name="Katoh M."/>
            <person name="Kawasawa Y."/>
            <person name="Kelso J."/>
            <person name="Kitamura H."/>
            <person name="Kitano H."/>
            <person name="Kollias G."/>
            <person name="Krishnan S.P."/>
            <person name="Kruger A."/>
            <person name="Kummerfeld S.K."/>
            <person name="Kurochkin I.V."/>
            <person name="Lareau L.F."/>
            <person name="Lazarevic D."/>
            <person name="Lipovich L."/>
            <person name="Liu J."/>
            <person name="Liuni S."/>
            <person name="McWilliam S."/>
            <person name="Madan Babu M."/>
            <person name="Madera M."/>
            <person name="Marchionni L."/>
            <person name="Matsuda H."/>
            <person name="Matsuzawa S."/>
            <person name="Miki H."/>
            <person name="Mignone F."/>
            <person name="Miyake S."/>
            <person name="Morris K."/>
            <person name="Mottagui-Tabar S."/>
            <person name="Mulder N."/>
            <person name="Nakano N."/>
            <person name="Nakauchi H."/>
            <person name="Ng P."/>
            <person name="Nilsson R."/>
            <person name="Nishiguchi S."/>
            <person name="Nishikawa S."/>
            <person name="Nori F."/>
            <person name="Ohara O."/>
            <person name="Okazaki Y."/>
            <person name="Orlando V."/>
            <person name="Pang K.C."/>
            <person name="Pavan W.J."/>
            <person name="Pavesi G."/>
            <person name="Pesole G."/>
            <person name="Petrovsky N."/>
            <person name="Piazza S."/>
            <person name="Reed J."/>
            <person name="Reid J.F."/>
            <person name="Ring B.Z."/>
            <person name="Ringwald M."/>
            <person name="Rost B."/>
            <person name="Ruan Y."/>
            <person name="Salzberg S.L."/>
            <person name="Sandelin A."/>
            <person name="Schneider C."/>
            <person name="Schoenbach C."/>
            <person name="Sekiguchi K."/>
            <person name="Semple C.A."/>
            <person name="Seno S."/>
            <person name="Sessa L."/>
            <person name="Sheng Y."/>
            <person name="Shibata Y."/>
            <person name="Shimada H."/>
            <person name="Shimada K."/>
            <person name="Silva D."/>
            <person name="Sinclair B."/>
            <person name="Sperling S."/>
            <person name="Stupka E."/>
            <person name="Sugiura K."/>
            <person name="Sultana R."/>
            <person name="Takenaka Y."/>
            <person name="Taki K."/>
            <person name="Tammoja K."/>
            <person name="Tan S.L."/>
            <person name="Tang S."/>
            <person name="Taylor M.S."/>
            <person name="Tegner J."/>
            <person name="Teichmann S.A."/>
            <person name="Ueda H.R."/>
            <person name="van Nimwegen E."/>
            <person name="Verardo R."/>
            <person name="Wei C.L."/>
            <person name="Yagi K."/>
            <person name="Yamanishi H."/>
            <person name="Zabarovsky E."/>
            <person name="Zhu S."/>
            <person name="Zimmer A."/>
            <person name="Hide W."/>
            <person name="Bult C."/>
            <person name="Grimmond S.M."/>
            <person name="Teasdale R.D."/>
            <person name="Liu E.T."/>
            <person name="Brusic V."/>
            <person name="Quackenbush J."/>
            <person name="Wahlestedt C."/>
            <person name="Mattick J.S."/>
            <person name="Hume D.A."/>
            <person name="Kai C."/>
            <person name="Sasaki D."/>
            <person name="Tomaru Y."/>
            <person name="Fukuda S."/>
            <person name="Kanamori-Katayama M."/>
            <person name="Suzuki M."/>
            <person name="Aoki J."/>
            <person name="Arakawa T."/>
            <person name="Iida J."/>
            <person name="Imamura K."/>
            <person name="Itoh M."/>
            <person name="Kato T."/>
            <person name="Kawaji H."/>
            <person name="Kawagashira N."/>
            <person name="Kawashima T."/>
            <person name="Kojima M."/>
            <person name="Kondo S."/>
            <person name="Konno H."/>
            <person name="Nakano K."/>
            <person name="Ninomiya N."/>
            <person name="Nishio T."/>
            <person name="Okada M."/>
            <person name="Plessy C."/>
            <person name="Shibata K."/>
            <person name="Shiraki T."/>
            <person name="Suzuki S."/>
            <person name="Tagami M."/>
            <person name="Waki K."/>
            <person name="Watahiki A."/>
            <person name="Okamura-Oho Y."/>
            <person name="Suzuki H."/>
            <person name="Kawai J."/>
            <person name="Hayashizaki Y."/>
        </authorList>
    </citation>
    <scope>NUCLEOTIDE SEQUENCE [LARGE SCALE MRNA] (ISOFORM 2)</scope>
    <source>
        <strain>C57BL/6J</strain>
        <strain>NOD</strain>
        <tissue>Diencephalon</tissue>
        <tissue>Spleen</tissue>
    </source>
</reference>
<reference key="2">
    <citation type="journal article" date="2009" name="PLoS Biol.">
        <title>Lineage-specific biology revealed by a finished genome assembly of the mouse.</title>
        <authorList>
            <person name="Church D.M."/>
            <person name="Goodstadt L."/>
            <person name="Hillier L.W."/>
            <person name="Zody M.C."/>
            <person name="Goldstein S."/>
            <person name="She X."/>
            <person name="Bult C.J."/>
            <person name="Agarwala R."/>
            <person name="Cherry J.L."/>
            <person name="DiCuccio M."/>
            <person name="Hlavina W."/>
            <person name="Kapustin Y."/>
            <person name="Meric P."/>
            <person name="Maglott D."/>
            <person name="Birtle Z."/>
            <person name="Marques A.C."/>
            <person name="Graves T."/>
            <person name="Zhou S."/>
            <person name="Teague B."/>
            <person name="Potamousis K."/>
            <person name="Churas C."/>
            <person name="Place M."/>
            <person name="Herschleb J."/>
            <person name="Runnheim R."/>
            <person name="Forrest D."/>
            <person name="Amos-Landgraf J."/>
            <person name="Schwartz D.C."/>
            <person name="Cheng Z."/>
            <person name="Lindblad-Toh K."/>
            <person name="Eichler E.E."/>
            <person name="Ponting C.P."/>
        </authorList>
    </citation>
    <scope>NUCLEOTIDE SEQUENCE [LARGE SCALE GENOMIC DNA]</scope>
    <source>
        <strain>C57BL/6J</strain>
    </source>
</reference>
<reference key="3">
    <citation type="journal article" date="2004" name="Genome Res.">
        <title>The status, quality, and expansion of the NIH full-length cDNA project: the Mammalian Gene Collection (MGC).</title>
        <authorList>
            <consortium name="The MGC Project Team"/>
        </authorList>
    </citation>
    <scope>NUCLEOTIDE SEQUENCE [LARGE SCALE MRNA] (ISOFORM 3)</scope>
</reference>
<reference key="4">
    <citation type="journal article" date="2010" name="Cell">
        <title>A tissue-specific atlas of mouse protein phosphorylation and expression.</title>
        <authorList>
            <person name="Huttlin E.L."/>
            <person name="Jedrychowski M.P."/>
            <person name="Elias J.E."/>
            <person name="Goswami T."/>
            <person name="Rad R."/>
            <person name="Beausoleil S.A."/>
            <person name="Villen J."/>
            <person name="Haas W."/>
            <person name="Sowa M.E."/>
            <person name="Gygi S.P."/>
        </authorList>
    </citation>
    <scope>IDENTIFICATION BY MASS SPECTROMETRY [LARGE SCALE ANALYSIS]</scope>
    <source>
        <tissue>Spleen</tissue>
        <tissue>Testis</tissue>
    </source>
</reference>
<reference key="5">
    <citation type="journal article" date="2011" name="Blood">
        <title>Codanin-1 mutations in congenital dyserythropoietic anemia type 1 affect HP1-alpha localization in erythroblasts.</title>
        <authorList>
            <person name="Renella R."/>
            <person name="Roberts N.A."/>
            <person name="Brown J.M."/>
            <person name="De Gobbi M."/>
            <person name="Bird L.E."/>
            <person name="Hassanali T."/>
            <person name="Sharpe J.A."/>
            <person name="Sloane-Stanley J."/>
            <person name="Ferguson D.J."/>
            <person name="Cordell J."/>
            <person name="Buckle V.J."/>
            <person name="Higgs D.R."/>
            <person name="Wood W.G."/>
        </authorList>
    </citation>
    <scope>DEVELOPMENTAL STAGE</scope>
    <scope>TISSUE SPECIFICITY</scope>
    <scope>DISRUPTION PHENOTYPE</scope>
</reference>
<name>CDAN1_MOUSE</name>
<keyword id="KW-0007">Acetylation</keyword>
<keyword id="KW-0025">Alternative splicing</keyword>
<keyword id="KW-0963">Cytoplasm</keyword>
<keyword id="KW-0472">Membrane</keyword>
<keyword id="KW-0539">Nucleus</keyword>
<keyword id="KW-0597">Phosphoprotein</keyword>
<keyword id="KW-1185">Reference proteome</keyword>
<keyword id="KW-0812">Transmembrane</keyword>
<keyword id="KW-1133">Transmembrane helix</keyword>
<protein>
    <recommendedName>
        <fullName>Codanin-1</fullName>
    </recommendedName>
</protein>
<proteinExistence type="evidence at protein level"/>
<organism>
    <name type="scientific">Mus musculus</name>
    <name type="common">Mouse</name>
    <dbReference type="NCBI Taxonomy" id="10090"/>
    <lineage>
        <taxon>Eukaryota</taxon>
        <taxon>Metazoa</taxon>
        <taxon>Chordata</taxon>
        <taxon>Craniata</taxon>
        <taxon>Vertebrata</taxon>
        <taxon>Euteleostomi</taxon>
        <taxon>Mammalia</taxon>
        <taxon>Eutheria</taxon>
        <taxon>Euarchontoglires</taxon>
        <taxon>Glires</taxon>
        <taxon>Rodentia</taxon>
        <taxon>Myomorpha</taxon>
        <taxon>Muroidea</taxon>
        <taxon>Muridae</taxon>
        <taxon>Murinae</taxon>
        <taxon>Mus</taxon>
        <taxon>Mus</taxon>
    </lineage>
</organism>